<gene>
    <name evidence="1" type="primary">der</name>
    <name type="synonym">engA</name>
    <name type="ordered locus">SPH_1817</name>
</gene>
<name>DER_STRPI</name>
<sequence length="436" mass="49082">MALPTIAIVGRPNVGKSTLFNRIAGERISIVEDVEGVTRDRIYATGEWLNRSFSMIDTGGIDDVDAPFMEQIKHQAEIAMEEADVIVFVVSGKEGITDADEYVARKLYKTHKPVILAVNKVDNPEMRNDIYDFYALGLGEPLPISSVHGIGTGDVLDAIVENLPNEYEEENPDVIKFSLIGRPNVGKSSLINAILGEDRVIASPVAGTTRDAIDTHFTDTDGQEFTMIDTAGMRKSGKVYENTEKYSVMRAMRAIDRSDVVLMVINAEEGIREYDKRIAGFAHEAGKGMIIVVNKWDTLEKDNHTMKNWEEDIREQFQYLPYAPIIFVSALTKQRLHKLPEMIKQISESQNTRIPSAVLNDVIMDAIAINPTPTDKGKRLKIFYATQVATKPPTFVIFVNEEELMHFSYLRFLENQIRKAFVFEGTPIHLIARKRK</sequence>
<feature type="chain" id="PRO_1000099165" description="GTPase Der">
    <location>
        <begin position="1"/>
        <end position="436"/>
    </location>
</feature>
<feature type="domain" description="EngA-type G 1">
    <location>
        <begin position="4"/>
        <end position="167"/>
    </location>
</feature>
<feature type="domain" description="EngA-type G 2">
    <location>
        <begin position="175"/>
        <end position="351"/>
    </location>
</feature>
<feature type="domain" description="KH-like" evidence="1">
    <location>
        <begin position="352"/>
        <end position="436"/>
    </location>
</feature>
<feature type="binding site" evidence="1">
    <location>
        <begin position="10"/>
        <end position="17"/>
    </location>
    <ligand>
        <name>GTP</name>
        <dbReference type="ChEBI" id="CHEBI:37565"/>
        <label>1</label>
    </ligand>
</feature>
<feature type="binding site" evidence="1">
    <location>
        <begin position="57"/>
        <end position="61"/>
    </location>
    <ligand>
        <name>GTP</name>
        <dbReference type="ChEBI" id="CHEBI:37565"/>
        <label>1</label>
    </ligand>
</feature>
<feature type="binding site" evidence="1">
    <location>
        <begin position="119"/>
        <end position="122"/>
    </location>
    <ligand>
        <name>GTP</name>
        <dbReference type="ChEBI" id="CHEBI:37565"/>
        <label>1</label>
    </ligand>
</feature>
<feature type="binding site" evidence="1">
    <location>
        <begin position="181"/>
        <end position="188"/>
    </location>
    <ligand>
        <name>GTP</name>
        <dbReference type="ChEBI" id="CHEBI:37565"/>
        <label>2</label>
    </ligand>
</feature>
<feature type="binding site" evidence="1">
    <location>
        <begin position="229"/>
        <end position="233"/>
    </location>
    <ligand>
        <name>GTP</name>
        <dbReference type="ChEBI" id="CHEBI:37565"/>
        <label>2</label>
    </ligand>
</feature>
<feature type="binding site" evidence="1">
    <location>
        <begin position="294"/>
        <end position="297"/>
    </location>
    <ligand>
        <name>GTP</name>
        <dbReference type="ChEBI" id="CHEBI:37565"/>
        <label>2</label>
    </ligand>
</feature>
<evidence type="ECO:0000255" key="1">
    <source>
        <dbReference type="HAMAP-Rule" id="MF_00195"/>
    </source>
</evidence>
<organism>
    <name type="scientific">Streptococcus pneumoniae (strain Hungary19A-6)</name>
    <dbReference type="NCBI Taxonomy" id="487214"/>
    <lineage>
        <taxon>Bacteria</taxon>
        <taxon>Bacillati</taxon>
        <taxon>Bacillota</taxon>
        <taxon>Bacilli</taxon>
        <taxon>Lactobacillales</taxon>
        <taxon>Streptococcaceae</taxon>
        <taxon>Streptococcus</taxon>
    </lineage>
</organism>
<comment type="function">
    <text evidence="1">GTPase that plays an essential role in the late steps of ribosome biogenesis.</text>
</comment>
<comment type="subunit">
    <text evidence="1">Associates with the 50S ribosomal subunit.</text>
</comment>
<comment type="similarity">
    <text evidence="1">Belongs to the TRAFAC class TrmE-Era-EngA-EngB-Septin-like GTPase superfamily. EngA (Der) GTPase family.</text>
</comment>
<protein>
    <recommendedName>
        <fullName evidence="1">GTPase Der</fullName>
    </recommendedName>
    <alternativeName>
        <fullName evidence="1">GTP-binding protein EngA</fullName>
    </alternativeName>
</protein>
<dbReference type="EMBL" id="CP000936">
    <property type="protein sequence ID" value="ACA35937.1"/>
    <property type="molecule type" value="Genomic_DNA"/>
</dbReference>
<dbReference type="RefSeq" id="WP_001207696.1">
    <property type="nucleotide sequence ID" value="NC_010380.1"/>
</dbReference>
<dbReference type="SMR" id="B1I766"/>
<dbReference type="GeneID" id="93740105"/>
<dbReference type="KEGG" id="spv:SPH_1817"/>
<dbReference type="HOGENOM" id="CLU_016077_6_2_9"/>
<dbReference type="Proteomes" id="UP000002163">
    <property type="component" value="Chromosome"/>
</dbReference>
<dbReference type="GO" id="GO:0005525">
    <property type="term" value="F:GTP binding"/>
    <property type="evidence" value="ECO:0007669"/>
    <property type="project" value="UniProtKB-UniRule"/>
</dbReference>
<dbReference type="GO" id="GO:0043022">
    <property type="term" value="F:ribosome binding"/>
    <property type="evidence" value="ECO:0007669"/>
    <property type="project" value="TreeGrafter"/>
</dbReference>
<dbReference type="GO" id="GO:0042254">
    <property type="term" value="P:ribosome biogenesis"/>
    <property type="evidence" value="ECO:0007669"/>
    <property type="project" value="UniProtKB-KW"/>
</dbReference>
<dbReference type="CDD" id="cd01894">
    <property type="entry name" value="EngA1"/>
    <property type="match status" value="1"/>
</dbReference>
<dbReference type="CDD" id="cd01895">
    <property type="entry name" value="EngA2"/>
    <property type="match status" value="1"/>
</dbReference>
<dbReference type="FunFam" id="3.30.300.20:FF:000004">
    <property type="entry name" value="GTPase Der"/>
    <property type="match status" value="1"/>
</dbReference>
<dbReference type="FunFam" id="3.40.50.300:FF:000040">
    <property type="entry name" value="GTPase Der"/>
    <property type="match status" value="1"/>
</dbReference>
<dbReference type="FunFam" id="3.40.50.300:FF:000057">
    <property type="entry name" value="GTPase Der"/>
    <property type="match status" value="1"/>
</dbReference>
<dbReference type="Gene3D" id="3.30.300.20">
    <property type="match status" value="1"/>
</dbReference>
<dbReference type="Gene3D" id="3.40.50.300">
    <property type="entry name" value="P-loop containing nucleotide triphosphate hydrolases"/>
    <property type="match status" value="2"/>
</dbReference>
<dbReference type="HAMAP" id="MF_00195">
    <property type="entry name" value="GTPase_Der"/>
    <property type="match status" value="1"/>
</dbReference>
<dbReference type="InterPro" id="IPR031166">
    <property type="entry name" value="G_ENGA"/>
</dbReference>
<dbReference type="InterPro" id="IPR006073">
    <property type="entry name" value="GTP-bd"/>
</dbReference>
<dbReference type="InterPro" id="IPR016484">
    <property type="entry name" value="GTPase_Der"/>
</dbReference>
<dbReference type="InterPro" id="IPR032859">
    <property type="entry name" value="KH_dom-like"/>
</dbReference>
<dbReference type="InterPro" id="IPR015946">
    <property type="entry name" value="KH_dom-like_a/b"/>
</dbReference>
<dbReference type="InterPro" id="IPR027417">
    <property type="entry name" value="P-loop_NTPase"/>
</dbReference>
<dbReference type="InterPro" id="IPR005225">
    <property type="entry name" value="Small_GTP-bd"/>
</dbReference>
<dbReference type="NCBIfam" id="TIGR03594">
    <property type="entry name" value="GTPase_EngA"/>
    <property type="match status" value="1"/>
</dbReference>
<dbReference type="NCBIfam" id="TIGR00231">
    <property type="entry name" value="small_GTP"/>
    <property type="match status" value="2"/>
</dbReference>
<dbReference type="PANTHER" id="PTHR43834">
    <property type="entry name" value="GTPASE DER"/>
    <property type="match status" value="1"/>
</dbReference>
<dbReference type="PANTHER" id="PTHR43834:SF6">
    <property type="entry name" value="GTPASE DER"/>
    <property type="match status" value="1"/>
</dbReference>
<dbReference type="Pfam" id="PF14714">
    <property type="entry name" value="KH_dom-like"/>
    <property type="match status" value="1"/>
</dbReference>
<dbReference type="Pfam" id="PF01926">
    <property type="entry name" value="MMR_HSR1"/>
    <property type="match status" value="2"/>
</dbReference>
<dbReference type="PIRSF" id="PIRSF006485">
    <property type="entry name" value="GTP-binding_EngA"/>
    <property type="match status" value="1"/>
</dbReference>
<dbReference type="PRINTS" id="PR00326">
    <property type="entry name" value="GTP1OBG"/>
</dbReference>
<dbReference type="SUPFAM" id="SSF52540">
    <property type="entry name" value="P-loop containing nucleoside triphosphate hydrolases"/>
    <property type="match status" value="2"/>
</dbReference>
<dbReference type="PROSITE" id="PS51712">
    <property type="entry name" value="G_ENGA"/>
    <property type="match status" value="2"/>
</dbReference>
<keyword id="KW-0342">GTP-binding</keyword>
<keyword id="KW-0547">Nucleotide-binding</keyword>
<keyword id="KW-0677">Repeat</keyword>
<keyword id="KW-0690">Ribosome biogenesis</keyword>
<proteinExistence type="inferred from homology"/>
<accession>B1I766</accession>
<reference key="1">
    <citation type="journal article" date="2010" name="Genome Biol.">
        <title>Structure and dynamics of the pan-genome of Streptococcus pneumoniae and closely related species.</title>
        <authorList>
            <person name="Donati C."/>
            <person name="Hiller N.L."/>
            <person name="Tettelin H."/>
            <person name="Muzzi A."/>
            <person name="Croucher N.J."/>
            <person name="Angiuoli S.V."/>
            <person name="Oggioni M."/>
            <person name="Dunning Hotopp J.C."/>
            <person name="Hu F.Z."/>
            <person name="Riley D.R."/>
            <person name="Covacci A."/>
            <person name="Mitchell T.J."/>
            <person name="Bentley S.D."/>
            <person name="Kilian M."/>
            <person name="Ehrlich G.D."/>
            <person name="Rappuoli R."/>
            <person name="Moxon E.R."/>
            <person name="Masignani V."/>
        </authorList>
    </citation>
    <scope>NUCLEOTIDE SEQUENCE [LARGE SCALE GENOMIC DNA]</scope>
    <source>
        <strain>Hungary19A-6</strain>
    </source>
</reference>